<organism>
    <name type="scientific">Aedes pseudoscutellaris reovirus (isolate France)</name>
    <name type="common">ApRV</name>
    <dbReference type="NCBI Taxonomy" id="648170"/>
    <lineage>
        <taxon>Viruses</taxon>
        <taxon>Riboviria</taxon>
        <taxon>Orthornavirae</taxon>
        <taxon>Duplornaviricota</taxon>
        <taxon>Resentoviricetes</taxon>
        <taxon>Reovirales</taxon>
        <taxon>Spinareoviridae</taxon>
        <taxon>Dinovernavirus</taxon>
        <taxon>Aedes pseudoscutellaris reovirus</taxon>
    </lineage>
</organism>
<organismHost>
    <name type="scientific">Aedes pseudoscutellaris</name>
    <name type="common">Mosquito</name>
    <name type="synonym">Stegomyia pseudoscutellaris</name>
    <dbReference type="NCBI Taxonomy" id="316597"/>
</organismHost>
<name>CAPSD_APRVF</name>
<comment type="function">
    <text evidence="1">Inner capsid protein that self-assembles to form an icosahedral capsid with a T=2 symmetry, which consists of 120 copies of VP2, with channels at each of its five-fold vertices. This capsid constitutes the innermost concentric layer of the viral mature particle.</text>
</comment>
<comment type="subunit">
    <text evidence="1">Homodecamer; each decamer is made up of two conformers of VP2, called VP2A and VP2B. 12 homodecamers assemble to form an icosahedral capsid.</text>
</comment>
<comment type="subcellular location">
    <subcellularLocation>
        <location evidence="1">Virion</location>
    </subcellularLocation>
    <text evidence="1">Found in the inner capsid (120 copies).</text>
</comment>
<comment type="miscellaneous">
    <text evidence="3">Function inferred by structural homology with BTV-fold inner capsid family.</text>
</comment>
<comment type="similarity">
    <text evidence="3">Belongs to the turreted BTV-fold inner capsid family.</text>
</comment>
<protein>
    <recommendedName>
        <fullName>Inner capsid protein VP3</fullName>
    </recommendedName>
</protein>
<accession>Q2Y0E8</accession>
<proteinExistence type="inferred from homology"/>
<dbReference type="EMBL" id="DQ087278">
    <property type="protein sequence ID" value="AAZ94070.1"/>
    <property type="molecule type" value="Genomic_RNA"/>
</dbReference>
<dbReference type="RefSeq" id="YP_443937.1">
    <property type="nucleotide sequence ID" value="NC_007668.1"/>
</dbReference>
<dbReference type="SMR" id="Q2Y0E8"/>
<dbReference type="KEGG" id="vg:5076690"/>
<dbReference type="Proteomes" id="UP000001676">
    <property type="component" value="Genome"/>
</dbReference>
<dbReference type="GO" id="GO:0039616">
    <property type="term" value="C:T=2 icosahedral viral capsid"/>
    <property type="evidence" value="ECO:0007669"/>
    <property type="project" value="UniProtKB-KW"/>
</dbReference>
<dbReference type="GO" id="GO:0039625">
    <property type="term" value="C:viral inner capsid"/>
    <property type="evidence" value="ECO:0007669"/>
    <property type="project" value="UniProtKB-KW"/>
</dbReference>
<dbReference type="InterPro" id="IPR049422">
    <property type="entry name" value="VP1/VP3_C"/>
</dbReference>
<dbReference type="Pfam" id="PF21416">
    <property type="entry name" value="VP1-like_C"/>
    <property type="match status" value="1"/>
</dbReference>
<evidence type="ECO:0000250" key="1">
    <source>
        <dbReference type="UniProtKB" id="P15024"/>
    </source>
</evidence>
<evidence type="ECO:0000256" key="2">
    <source>
        <dbReference type="SAM" id="MobiDB-lite"/>
    </source>
</evidence>
<evidence type="ECO:0000305" key="3"/>
<reference key="1">
    <citation type="journal article" date="2005" name="Virology">
        <title>Expansion of family Reoviridae to include nine-segmented dsRNA viruses: isolation and characterization of a new virus designated Aedes pseudoscutellaris reovirus assigned to a proposed genus (Dinovernavirus).</title>
        <authorList>
            <person name="Attoui H."/>
            <person name="Mohd Jaafar F."/>
            <person name="Belhouchet M."/>
            <person name="Biagini P."/>
            <person name="Cantaloube J.F."/>
            <person name="de Micco P."/>
            <person name="de Lamballerie X."/>
        </authorList>
    </citation>
    <scope>NUCLEOTIDE SEQUENCE [GENOMIC RNA]</scope>
</reference>
<sequence length="1202" mass="136270">MRPIRMYKNNQERTTTKHQETIEDNQNEQTTSDQRFTRSSNSGKINVERISSSRHQIADGKTMSSYTTNEANYTSKDSVQHGGSSITYTSNTTGNPRVTNARANIDETYATGTVEDLSSTSHGQEPEIESFADRAELAMMIQGMTVGALTVQPMRSIRSTFANLANILIFHDVFATEDKPTSSIEYHSDEMVVNMPKQTYNPIDTVAKILYLPSLEKFKYGTGIVQMNYSSNVSQLFPNTTNIINTITDGLTYANRTEFFIRVMVLFMMDRKILTMDFYDVDASAISNNAILPTIPTITGVSPLLRIDTRTEPIWYNDAIKTLINNLTIQYGKIKTVLDANAVKRYSVVGYPIDQFRAYLYNHNLLEYLGKKVKREDIMSLIKALSYEFDLITISDLEYQNIPKWFSDNDLSRFVFAVCMFPDIIRQFHALNIDYFSQANAFTVKSENSIIKMLNSNQNMEPSIINWFLFRICAIDKTVIDDYFSLEMTPIIMRPKLYDFDMKRGEPVSLLYILELILFSIMFPNVTQHMLGQIQARILFICMYAFRQEYLKFIAKFGFFYKIVNGRKEYIQVANQNERMSENVDVLTGNLYPSLFTDDPTLSSVAPTLAKIARLMKPTTSLTPDERAISAKFPRFKDASHLNPYSSLNVGGRTQHSVTYTRMYDAIDEMFNLILKSFANNFAQRPRAGVTQLKSLLTQLTEPLCLELDGHVYHLYNVMANMMQNFIPNTDGQFHSFRACAYAVVDSGNIYRVVQNGDELNESLVIDTAIVWGLLGNTDNAYGNAIGATGTANVPTKVQPVIPTPDNFITPTIHLKTSIDAVCSVEGILLLILSRQINIPGYEVELDKLRIGISQPKVSERQYQRARESIKNMLGSGDYNIAPLHFLLHTEHRSTRLSKPLIRRVFDNVVQPYVANLDPAEFENTPQLIESSNMTRLQIALKMLTGDMDDIVKGLILHKRACAKFDVYETLTIPNDVQTIVLTMQHISTQTENNIVYYVFLINGVKIFAEDVKNINFQVDTTGIWPEHVVTLLLRAINNGFNTYISMPNILYKPTITADVRQFLNTTKAEVLLVSNRSVIHEIMFFDNALQPKKSSDTLALSEAVYRTIWNSSVITQRILARGLMNLEDNKPPEAKISQQSELDMGKIDETSGEPIYTSGLKKMDSSKISMFNVVLSAGSDVIRQAAIKYSAVRTQEVILFE</sequence>
<keyword id="KW-0167">Capsid protein</keyword>
<keyword id="KW-1153">Inner capsid protein</keyword>
<keyword id="KW-1185">Reference proteome</keyword>
<keyword id="KW-1141">T=2 icosahedral capsid protein</keyword>
<keyword id="KW-0946">Virion</keyword>
<gene>
    <name type="primary">S3</name>
</gene>
<feature type="chain" id="PRO_0000403356" description="Inner capsid protein VP3">
    <location>
        <begin position="1"/>
        <end position="1202"/>
    </location>
</feature>
<feature type="region of interest" description="Disordered" evidence="2">
    <location>
        <begin position="1"/>
        <end position="45"/>
    </location>
</feature>
<feature type="region of interest" description="Disordered" evidence="2">
    <location>
        <begin position="73"/>
        <end position="99"/>
    </location>
</feature>
<feature type="compositionally biased region" description="Basic and acidic residues" evidence="2">
    <location>
        <begin position="10"/>
        <end position="21"/>
    </location>
</feature>
<feature type="compositionally biased region" description="Polar residues" evidence="2">
    <location>
        <begin position="27"/>
        <end position="45"/>
    </location>
</feature>